<accession>A1KFQ1</accession>
<feature type="chain" id="PRO_0000301057" description="Peptide deformylase">
    <location>
        <begin position="1"/>
        <end position="197"/>
    </location>
</feature>
<feature type="active site" evidence="1">
    <location>
        <position position="149"/>
    </location>
</feature>
<feature type="binding site" evidence="1">
    <location>
        <position position="106"/>
    </location>
    <ligand>
        <name>Fe cation</name>
        <dbReference type="ChEBI" id="CHEBI:24875"/>
    </ligand>
</feature>
<feature type="binding site" evidence="1">
    <location>
        <position position="148"/>
    </location>
    <ligand>
        <name>Fe cation</name>
        <dbReference type="ChEBI" id="CHEBI:24875"/>
    </ligand>
</feature>
<feature type="binding site" evidence="1">
    <location>
        <position position="152"/>
    </location>
    <ligand>
        <name>Fe cation</name>
        <dbReference type="ChEBI" id="CHEBI:24875"/>
    </ligand>
</feature>
<organism>
    <name type="scientific">Mycobacterium bovis (strain BCG / Pasteur 1173P2)</name>
    <dbReference type="NCBI Taxonomy" id="410289"/>
    <lineage>
        <taxon>Bacteria</taxon>
        <taxon>Bacillati</taxon>
        <taxon>Actinomycetota</taxon>
        <taxon>Actinomycetes</taxon>
        <taxon>Mycobacteriales</taxon>
        <taxon>Mycobacteriaceae</taxon>
        <taxon>Mycobacterium</taxon>
        <taxon>Mycobacterium tuberculosis complex</taxon>
    </lineage>
</organism>
<proteinExistence type="inferred from homology"/>
<reference key="1">
    <citation type="journal article" date="2007" name="Proc. Natl. Acad. Sci. U.S.A.">
        <title>Genome plasticity of BCG and impact on vaccine efficacy.</title>
        <authorList>
            <person name="Brosch R."/>
            <person name="Gordon S.V."/>
            <person name="Garnier T."/>
            <person name="Eiglmeier K."/>
            <person name="Frigui W."/>
            <person name="Valenti P."/>
            <person name="Dos Santos S."/>
            <person name="Duthoy S."/>
            <person name="Lacroix C."/>
            <person name="Garcia-Pelayo C."/>
            <person name="Inwald J.K."/>
            <person name="Golby P."/>
            <person name="Garcia J.N."/>
            <person name="Hewinson R.G."/>
            <person name="Behr M.A."/>
            <person name="Quail M.A."/>
            <person name="Churcher C."/>
            <person name="Barrell B.G."/>
            <person name="Parkhill J."/>
            <person name="Cole S.T."/>
        </authorList>
    </citation>
    <scope>NUCLEOTIDE SEQUENCE [LARGE SCALE GENOMIC DNA]</scope>
    <source>
        <strain>BCG / Pasteur 1173P2</strain>
    </source>
</reference>
<sequence>MAVVPIRIVGDPVLHTATTPVTVAADGSLPADLAQLIATMYDTMDAANGVGLAANQIGCSLRLFVYDCAADRAMTARRRGVVINPVLETSEIPETMPDPDTDDEGCLSVPGESFPTGRAKWARVTGLDADGSPVSIEGTGLFARMLQHETGHLDGFLYLDRLIGRYARNAKRAVKSHGWGVPGLSWLPGEDPDPFGH</sequence>
<comment type="function">
    <text evidence="1">Removes the formyl group from the N-terminal Met of newly synthesized proteins. Requires at least a dipeptide for an efficient rate of reaction. N-terminal L-methionine is a prerequisite for activity but the enzyme has broad specificity at other positions.</text>
</comment>
<comment type="catalytic activity">
    <reaction evidence="1">
        <text>N-terminal N-formyl-L-methionyl-[peptide] + H2O = N-terminal L-methionyl-[peptide] + formate</text>
        <dbReference type="Rhea" id="RHEA:24420"/>
        <dbReference type="Rhea" id="RHEA-COMP:10639"/>
        <dbReference type="Rhea" id="RHEA-COMP:10640"/>
        <dbReference type="ChEBI" id="CHEBI:15377"/>
        <dbReference type="ChEBI" id="CHEBI:15740"/>
        <dbReference type="ChEBI" id="CHEBI:49298"/>
        <dbReference type="ChEBI" id="CHEBI:64731"/>
        <dbReference type="EC" id="3.5.1.88"/>
    </reaction>
</comment>
<comment type="cofactor">
    <cofactor evidence="1">
        <name>Fe(2+)</name>
        <dbReference type="ChEBI" id="CHEBI:29033"/>
    </cofactor>
    <text evidence="1">Binds 1 Fe(2+) ion.</text>
</comment>
<comment type="similarity">
    <text evidence="1">Belongs to the polypeptide deformylase family.</text>
</comment>
<dbReference type="EC" id="3.5.1.88" evidence="1"/>
<dbReference type="EMBL" id="AM408590">
    <property type="protein sequence ID" value="CAL70453.1"/>
    <property type="molecule type" value="Genomic_DNA"/>
</dbReference>
<dbReference type="RefSeq" id="WP_003402185.1">
    <property type="nucleotide sequence ID" value="NC_008769.1"/>
</dbReference>
<dbReference type="SMR" id="A1KFQ1"/>
<dbReference type="KEGG" id="mbb:BCG_0468c"/>
<dbReference type="HOGENOM" id="CLU_061901_1_2_11"/>
<dbReference type="Proteomes" id="UP000001472">
    <property type="component" value="Chromosome"/>
</dbReference>
<dbReference type="GO" id="GO:0046872">
    <property type="term" value="F:metal ion binding"/>
    <property type="evidence" value="ECO:0007669"/>
    <property type="project" value="UniProtKB-KW"/>
</dbReference>
<dbReference type="GO" id="GO:0042586">
    <property type="term" value="F:peptide deformylase activity"/>
    <property type="evidence" value="ECO:0007669"/>
    <property type="project" value="UniProtKB-UniRule"/>
</dbReference>
<dbReference type="GO" id="GO:0043686">
    <property type="term" value="P:co-translational protein modification"/>
    <property type="evidence" value="ECO:0007669"/>
    <property type="project" value="TreeGrafter"/>
</dbReference>
<dbReference type="GO" id="GO:0006412">
    <property type="term" value="P:translation"/>
    <property type="evidence" value="ECO:0007669"/>
    <property type="project" value="UniProtKB-UniRule"/>
</dbReference>
<dbReference type="CDD" id="cd00487">
    <property type="entry name" value="Pep_deformylase"/>
    <property type="match status" value="1"/>
</dbReference>
<dbReference type="FunFam" id="3.90.45.10:FF:000011">
    <property type="entry name" value="Peptide deformylase"/>
    <property type="match status" value="1"/>
</dbReference>
<dbReference type="Gene3D" id="3.90.45.10">
    <property type="entry name" value="Peptide deformylase"/>
    <property type="match status" value="1"/>
</dbReference>
<dbReference type="HAMAP" id="MF_00163">
    <property type="entry name" value="Pep_deformylase"/>
    <property type="match status" value="1"/>
</dbReference>
<dbReference type="InterPro" id="IPR023635">
    <property type="entry name" value="Peptide_deformylase"/>
</dbReference>
<dbReference type="InterPro" id="IPR036821">
    <property type="entry name" value="Peptide_deformylase_sf"/>
</dbReference>
<dbReference type="NCBIfam" id="TIGR00079">
    <property type="entry name" value="pept_deformyl"/>
    <property type="match status" value="1"/>
</dbReference>
<dbReference type="NCBIfam" id="NF001159">
    <property type="entry name" value="PRK00150.1-3"/>
    <property type="match status" value="1"/>
</dbReference>
<dbReference type="NCBIfam" id="NF009483">
    <property type="entry name" value="PRK12846.1-4"/>
    <property type="match status" value="1"/>
</dbReference>
<dbReference type="PANTHER" id="PTHR10458">
    <property type="entry name" value="PEPTIDE DEFORMYLASE"/>
    <property type="match status" value="1"/>
</dbReference>
<dbReference type="PANTHER" id="PTHR10458:SF2">
    <property type="entry name" value="PEPTIDE DEFORMYLASE, MITOCHONDRIAL"/>
    <property type="match status" value="1"/>
</dbReference>
<dbReference type="Pfam" id="PF01327">
    <property type="entry name" value="Pep_deformylase"/>
    <property type="match status" value="1"/>
</dbReference>
<dbReference type="PIRSF" id="PIRSF004749">
    <property type="entry name" value="Pep_def"/>
    <property type="match status" value="1"/>
</dbReference>
<dbReference type="PRINTS" id="PR01576">
    <property type="entry name" value="PDEFORMYLASE"/>
</dbReference>
<dbReference type="SUPFAM" id="SSF56420">
    <property type="entry name" value="Peptide deformylase"/>
    <property type="match status" value="1"/>
</dbReference>
<name>DEF_MYCBP</name>
<gene>
    <name evidence="1" type="primary">def</name>
    <name type="ordered locus">BCG_0468c</name>
</gene>
<evidence type="ECO:0000255" key="1">
    <source>
        <dbReference type="HAMAP-Rule" id="MF_00163"/>
    </source>
</evidence>
<protein>
    <recommendedName>
        <fullName evidence="1">Peptide deformylase</fullName>
        <shortName evidence="1">PDF</shortName>
        <ecNumber evidence="1">3.5.1.88</ecNumber>
    </recommendedName>
    <alternativeName>
        <fullName evidence="1">Polypeptide deformylase</fullName>
    </alternativeName>
</protein>
<keyword id="KW-0378">Hydrolase</keyword>
<keyword id="KW-0408">Iron</keyword>
<keyword id="KW-0479">Metal-binding</keyword>
<keyword id="KW-0648">Protein biosynthesis</keyword>